<dbReference type="EC" id="5.3.1.9" evidence="1"/>
<dbReference type="EMBL" id="AP006628">
    <property type="protein sequence ID" value="BAD04368.1"/>
    <property type="molecule type" value="Genomic_DNA"/>
</dbReference>
<dbReference type="SMR" id="Q6YQU0"/>
<dbReference type="STRING" id="262768.PAM_283"/>
<dbReference type="KEGG" id="poy:PAM_283"/>
<dbReference type="eggNOG" id="COG0166">
    <property type="taxonomic scope" value="Bacteria"/>
</dbReference>
<dbReference type="HOGENOM" id="CLU_037303_0_1_14"/>
<dbReference type="BioCyc" id="OYEL262768:G1G26-341-MONOMER"/>
<dbReference type="UniPathway" id="UPA00109">
    <property type="reaction ID" value="UER00181"/>
</dbReference>
<dbReference type="UniPathway" id="UPA00138"/>
<dbReference type="Proteomes" id="UP000002523">
    <property type="component" value="Chromosome"/>
</dbReference>
<dbReference type="GO" id="GO:0005829">
    <property type="term" value="C:cytosol"/>
    <property type="evidence" value="ECO:0007669"/>
    <property type="project" value="TreeGrafter"/>
</dbReference>
<dbReference type="GO" id="GO:0097367">
    <property type="term" value="F:carbohydrate derivative binding"/>
    <property type="evidence" value="ECO:0007669"/>
    <property type="project" value="InterPro"/>
</dbReference>
<dbReference type="GO" id="GO:0004347">
    <property type="term" value="F:glucose-6-phosphate isomerase activity"/>
    <property type="evidence" value="ECO:0007669"/>
    <property type="project" value="UniProtKB-UniRule"/>
</dbReference>
<dbReference type="GO" id="GO:0048029">
    <property type="term" value="F:monosaccharide binding"/>
    <property type="evidence" value="ECO:0007669"/>
    <property type="project" value="TreeGrafter"/>
</dbReference>
<dbReference type="GO" id="GO:0006094">
    <property type="term" value="P:gluconeogenesis"/>
    <property type="evidence" value="ECO:0007669"/>
    <property type="project" value="UniProtKB-UniRule"/>
</dbReference>
<dbReference type="GO" id="GO:0051156">
    <property type="term" value="P:glucose 6-phosphate metabolic process"/>
    <property type="evidence" value="ECO:0007669"/>
    <property type="project" value="TreeGrafter"/>
</dbReference>
<dbReference type="GO" id="GO:0006096">
    <property type="term" value="P:glycolytic process"/>
    <property type="evidence" value="ECO:0007669"/>
    <property type="project" value="UniProtKB-UniRule"/>
</dbReference>
<dbReference type="CDD" id="cd05015">
    <property type="entry name" value="SIS_PGI_1"/>
    <property type="match status" value="1"/>
</dbReference>
<dbReference type="CDD" id="cd05016">
    <property type="entry name" value="SIS_PGI_2"/>
    <property type="match status" value="1"/>
</dbReference>
<dbReference type="FunFam" id="3.40.50.10490:FF:000016">
    <property type="entry name" value="Glucose-6-phosphate isomerase"/>
    <property type="match status" value="1"/>
</dbReference>
<dbReference type="Gene3D" id="3.40.50.10490">
    <property type="entry name" value="Glucose-6-phosphate isomerase like protein, domain 1"/>
    <property type="match status" value="2"/>
</dbReference>
<dbReference type="HAMAP" id="MF_00473">
    <property type="entry name" value="G6P_isomerase"/>
    <property type="match status" value="1"/>
</dbReference>
<dbReference type="InterPro" id="IPR001672">
    <property type="entry name" value="G6P_Isomerase"/>
</dbReference>
<dbReference type="InterPro" id="IPR018189">
    <property type="entry name" value="Phosphoglucose_isomerase_CS"/>
</dbReference>
<dbReference type="InterPro" id="IPR046348">
    <property type="entry name" value="SIS_dom_sf"/>
</dbReference>
<dbReference type="InterPro" id="IPR035476">
    <property type="entry name" value="SIS_PGI_1"/>
</dbReference>
<dbReference type="InterPro" id="IPR035482">
    <property type="entry name" value="SIS_PGI_2"/>
</dbReference>
<dbReference type="NCBIfam" id="NF010697">
    <property type="entry name" value="PRK14097.1"/>
    <property type="match status" value="1"/>
</dbReference>
<dbReference type="PANTHER" id="PTHR11469">
    <property type="entry name" value="GLUCOSE-6-PHOSPHATE ISOMERASE"/>
    <property type="match status" value="1"/>
</dbReference>
<dbReference type="PANTHER" id="PTHR11469:SF1">
    <property type="entry name" value="GLUCOSE-6-PHOSPHATE ISOMERASE"/>
    <property type="match status" value="1"/>
</dbReference>
<dbReference type="Pfam" id="PF00342">
    <property type="entry name" value="PGI"/>
    <property type="match status" value="1"/>
</dbReference>
<dbReference type="PRINTS" id="PR00662">
    <property type="entry name" value="G6PISOMERASE"/>
</dbReference>
<dbReference type="SUPFAM" id="SSF53697">
    <property type="entry name" value="SIS domain"/>
    <property type="match status" value="1"/>
</dbReference>
<dbReference type="PROSITE" id="PS00765">
    <property type="entry name" value="P_GLUCOSE_ISOMERASE_1"/>
    <property type="match status" value="1"/>
</dbReference>
<dbReference type="PROSITE" id="PS00174">
    <property type="entry name" value="P_GLUCOSE_ISOMERASE_2"/>
    <property type="match status" value="1"/>
</dbReference>
<dbReference type="PROSITE" id="PS51463">
    <property type="entry name" value="P_GLUCOSE_ISOMERASE_3"/>
    <property type="match status" value="1"/>
</dbReference>
<protein>
    <recommendedName>
        <fullName evidence="1">Glucose-6-phosphate isomerase</fullName>
        <shortName evidence="1">GPI</shortName>
        <ecNumber evidence="1">5.3.1.9</ecNumber>
    </recommendedName>
    <alternativeName>
        <fullName evidence="1">Phosphoglucose isomerase</fullName>
        <shortName evidence="1">PGI</shortName>
    </alternativeName>
    <alternativeName>
        <fullName evidence="1">Phosphohexose isomerase</fullName>
        <shortName evidence="1">PHI</shortName>
    </alternativeName>
</protein>
<proteinExistence type="inferred from homology"/>
<name>G6PI_ONYPE</name>
<evidence type="ECO:0000255" key="1">
    <source>
        <dbReference type="HAMAP-Rule" id="MF_00473"/>
    </source>
</evidence>
<feature type="chain" id="PRO_0000180698" description="Glucose-6-phosphate isomerase">
    <location>
        <begin position="1"/>
        <end position="426"/>
    </location>
</feature>
<feature type="active site" description="Proton donor" evidence="1">
    <location>
        <position position="282"/>
    </location>
</feature>
<feature type="active site" evidence="1">
    <location>
        <position position="303"/>
    </location>
</feature>
<feature type="active site" evidence="1">
    <location>
        <position position="417"/>
    </location>
</feature>
<gene>
    <name evidence="1" type="primary">pgi</name>
    <name type="ordered locus">PAM_283</name>
</gene>
<comment type="function">
    <text evidence="1">Catalyzes the reversible isomerization of glucose-6-phosphate to fructose-6-phosphate.</text>
</comment>
<comment type="catalytic activity">
    <reaction evidence="1">
        <text>alpha-D-glucose 6-phosphate = beta-D-fructose 6-phosphate</text>
        <dbReference type="Rhea" id="RHEA:11816"/>
        <dbReference type="ChEBI" id="CHEBI:57634"/>
        <dbReference type="ChEBI" id="CHEBI:58225"/>
        <dbReference type="EC" id="5.3.1.9"/>
    </reaction>
</comment>
<comment type="pathway">
    <text evidence="1">Carbohydrate biosynthesis; gluconeogenesis.</text>
</comment>
<comment type="pathway">
    <text evidence="1">Carbohydrate degradation; glycolysis; D-glyceraldehyde 3-phosphate and glycerone phosphate from D-glucose: step 2/4.</text>
</comment>
<comment type="subcellular location">
    <subcellularLocation>
        <location evidence="1">Cytoplasm</location>
    </subcellularLocation>
</comment>
<comment type="similarity">
    <text evidence="1">Belongs to the GPI family.</text>
</comment>
<sequence>MLKLNLEGIYNFLDWHNYAQTFAPQIKVIHQKLHQDQQLKEKYLGWLELPLHFDFQELEKMKQLKNSHPNLDVLVVIGIGGSYLGAKAGIEFLQTPFKKTKPEILFAGHQASGNYLTNLLHYLKDKNWAINVISKSGITLEPALAFRILKKEIEEKYGKQLAKNRIFVTTDSQKGVLLNLALKEGYQTFVIPDSVGGRFSVFTSVGILPFVFANLDVVSMMKGALQAYHDTFQEDLFQNQAYQYALARYLLHTQQNKKMELLVSYEPHLLSFSEWWKQLFAESEGKEEKGLFVGATNNSTDLHSLGQFIQEGTKMLFETVLNVTSIKDDCVVPHIPNELDNLNYVAGKTYSQINQKILQATKQAHIEGKVPNLEIVIPTLDAYHFGYLAYFFQKACAMSGSLLGINPFNQPGVEIYKQKMFALLKS</sequence>
<organism>
    <name type="scientific">Onion yellows phytoplasma (strain OY-M)</name>
    <dbReference type="NCBI Taxonomy" id="262768"/>
    <lineage>
        <taxon>Bacteria</taxon>
        <taxon>Bacillati</taxon>
        <taxon>Mycoplasmatota</taxon>
        <taxon>Mollicutes</taxon>
        <taxon>Acholeplasmatales</taxon>
        <taxon>Acholeplasmataceae</taxon>
        <taxon>Candidatus Phytoplasma</taxon>
        <taxon>16SrI (Aster yellows group)</taxon>
    </lineage>
</organism>
<accession>Q6YQU0</accession>
<keyword id="KW-0963">Cytoplasm</keyword>
<keyword id="KW-0312">Gluconeogenesis</keyword>
<keyword id="KW-0324">Glycolysis</keyword>
<keyword id="KW-0413">Isomerase</keyword>
<reference key="1">
    <citation type="journal article" date="2004" name="Nat. Genet.">
        <title>Reductive evolution suggested from the complete genome sequence of a plant-pathogenic phytoplasma.</title>
        <authorList>
            <person name="Oshima K."/>
            <person name="Kakizawa S."/>
            <person name="Nishigawa H."/>
            <person name="Jung H.-Y."/>
            <person name="Wei W."/>
            <person name="Suzuki S."/>
            <person name="Arashida R."/>
            <person name="Nakata D."/>
            <person name="Miyata S."/>
            <person name="Ugaki M."/>
            <person name="Namba S."/>
        </authorList>
    </citation>
    <scope>NUCLEOTIDE SEQUENCE [LARGE SCALE GENOMIC DNA]</scope>
    <source>
        <strain>OY-M</strain>
    </source>
</reference>